<keyword id="KW-0058">Aromatic hydrocarbons catabolism</keyword>
<keyword id="KW-0520">NAD</keyword>
<keyword id="KW-0560">Oxidoreductase</keyword>
<keyword id="KW-1185">Reference proteome</keyword>
<proteinExistence type="inferred from homology"/>
<gene>
    <name type="ordered locus">NFA_30500</name>
</gene>
<comment type="catalytic activity">
    <reaction evidence="1">
        <text>acetaldehyde + NAD(+) + CoA = acetyl-CoA + NADH + H(+)</text>
        <dbReference type="Rhea" id="RHEA:23288"/>
        <dbReference type="ChEBI" id="CHEBI:15343"/>
        <dbReference type="ChEBI" id="CHEBI:15378"/>
        <dbReference type="ChEBI" id="CHEBI:57287"/>
        <dbReference type="ChEBI" id="CHEBI:57288"/>
        <dbReference type="ChEBI" id="CHEBI:57540"/>
        <dbReference type="ChEBI" id="CHEBI:57945"/>
        <dbReference type="EC" id="1.2.1.10"/>
    </reaction>
</comment>
<comment type="similarity">
    <text evidence="1">Belongs to the acetaldehyde dehydrogenase family.</text>
</comment>
<feature type="chain" id="PRO_0000387696" description="Acetaldehyde dehydrogenase 2">
    <location>
        <begin position="1"/>
        <end position="292"/>
    </location>
</feature>
<feature type="active site" description="Acyl-thioester intermediate" evidence="1">
    <location>
        <position position="126"/>
    </location>
</feature>
<feature type="binding site" evidence="1">
    <location>
        <begin position="11"/>
        <end position="14"/>
    </location>
    <ligand>
        <name>NAD(+)</name>
        <dbReference type="ChEBI" id="CHEBI:57540"/>
    </ligand>
</feature>
<feature type="binding site" evidence="1">
    <location>
        <begin position="157"/>
        <end position="165"/>
    </location>
    <ligand>
        <name>NAD(+)</name>
        <dbReference type="ChEBI" id="CHEBI:57540"/>
    </ligand>
</feature>
<feature type="binding site" evidence="1">
    <location>
        <position position="266"/>
    </location>
    <ligand>
        <name>NAD(+)</name>
        <dbReference type="ChEBI" id="CHEBI:57540"/>
    </ligand>
</feature>
<protein>
    <recommendedName>
        <fullName evidence="1">Acetaldehyde dehydrogenase 2</fullName>
        <ecNumber evidence="1">1.2.1.10</ecNumber>
    </recommendedName>
    <alternativeName>
        <fullName evidence="1">Acetaldehyde dehydrogenase [acetylating] 2</fullName>
    </alternativeName>
</protein>
<accession>Q5YV94</accession>
<name>ACDH2_NOCFA</name>
<organism>
    <name type="scientific">Nocardia farcinica (strain IFM 10152)</name>
    <dbReference type="NCBI Taxonomy" id="247156"/>
    <lineage>
        <taxon>Bacteria</taxon>
        <taxon>Bacillati</taxon>
        <taxon>Actinomycetota</taxon>
        <taxon>Actinomycetes</taxon>
        <taxon>Mycobacteriales</taxon>
        <taxon>Nocardiaceae</taxon>
        <taxon>Nocardia</taxon>
    </lineage>
</organism>
<evidence type="ECO:0000255" key="1">
    <source>
        <dbReference type="HAMAP-Rule" id="MF_01657"/>
    </source>
</evidence>
<sequence>MSRWKAAIVGSGNIGTDLMYKLLRSEHVDPVYMVGIDPASEGLARAAQEGLDASAEGVDWLLSRRELPDVVFEATSAKVHAAAAPRYAAAGITAIDLTPASVGPYVVPAVNLHEHLDAPNLNMVSCAGQATIPILAAINRVADASYGEIVAAIASHSAGPGTRQNLSEFSEKTGRALAQVAGADRAKAISVINPAEPPMNMRDTVYAKVRNPDADAIERAVLDMVAEVQRYVPGYTLRLIDVDGDLVTVMLEVVGAGDFLPTYAGNLDIITAAAVQVADVLAQRTLVEEPAR</sequence>
<reference key="1">
    <citation type="journal article" date="2004" name="Proc. Natl. Acad. Sci. U.S.A.">
        <title>The complete genomic sequence of Nocardia farcinica IFM 10152.</title>
        <authorList>
            <person name="Ishikawa J."/>
            <person name="Yamashita A."/>
            <person name="Mikami Y."/>
            <person name="Hoshino Y."/>
            <person name="Kurita H."/>
            <person name="Hotta K."/>
            <person name="Shiba T."/>
            <person name="Hattori M."/>
        </authorList>
    </citation>
    <scope>NUCLEOTIDE SEQUENCE [LARGE SCALE GENOMIC DNA]</scope>
    <source>
        <strain>IFM 10152</strain>
    </source>
</reference>
<dbReference type="EC" id="1.2.1.10" evidence="1"/>
<dbReference type="EMBL" id="AP006618">
    <property type="protein sequence ID" value="BAD57897.1"/>
    <property type="molecule type" value="Genomic_DNA"/>
</dbReference>
<dbReference type="RefSeq" id="WP_011209582.1">
    <property type="nucleotide sequence ID" value="NC_006361.1"/>
</dbReference>
<dbReference type="SMR" id="Q5YV94"/>
<dbReference type="STRING" id="247156.NFA_30500"/>
<dbReference type="GeneID" id="61133767"/>
<dbReference type="KEGG" id="nfa:NFA_30500"/>
<dbReference type="eggNOG" id="COG4569">
    <property type="taxonomic scope" value="Bacteria"/>
</dbReference>
<dbReference type="HOGENOM" id="CLU_062208_0_0_11"/>
<dbReference type="OrthoDB" id="9786743at2"/>
<dbReference type="Proteomes" id="UP000006820">
    <property type="component" value="Chromosome"/>
</dbReference>
<dbReference type="GO" id="GO:0008774">
    <property type="term" value="F:acetaldehyde dehydrogenase (acetylating) activity"/>
    <property type="evidence" value="ECO:0007669"/>
    <property type="project" value="UniProtKB-UniRule"/>
</dbReference>
<dbReference type="GO" id="GO:0051287">
    <property type="term" value="F:NAD binding"/>
    <property type="evidence" value="ECO:0007669"/>
    <property type="project" value="UniProtKB-UniRule"/>
</dbReference>
<dbReference type="GO" id="GO:0009056">
    <property type="term" value="P:catabolic process"/>
    <property type="evidence" value="ECO:0007669"/>
    <property type="project" value="UniProtKB-KW"/>
</dbReference>
<dbReference type="CDD" id="cd23933">
    <property type="entry name" value="ALDH_C"/>
    <property type="match status" value="1"/>
</dbReference>
<dbReference type="Gene3D" id="3.30.360.10">
    <property type="entry name" value="Dihydrodipicolinate Reductase, domain 2"/>
    <property type="match status" value="1"/>
</dbReference>
<dbReference type="Gene3D" id="3.40.50.720">
    <property type="entry name" value="NAD(P)-binding Rossmann-like Domain"/>
    <property type="match status" value="1"/>
</dbReference>
<dbReference type="HAMAP" id="MF_01657">
    <property type="entry name" value="Ac_ald_DH_ac"/>
    <property type="match status" value="1"/>
</dbReference>
<dbReference type="InterPro" id="IPR003361">
    <property type="entry name" value="Acetaldehyde_dehydrogenase"/>
</dbReference>
<dbReference type="InterPro" id="IPR015426">
    <property type="entry name" value="Acetylaldehyde_DH_C"/>
</dbReference>
<dbReference type="InterPro" id="IPR036291">
    <property type="entry name" value="NAD(P)-bd_dom_sf"/>
</dbReference>
<dbReference type="InterPro" id="IPR000534">
    <property type="entry name" value="Semialdehyde_DH_NAD-bd"/>
</dbReference>
<dbReference type="NCBIfam" id="TIGR03215">
    <property type="entry name" value="ac_ald_DH_ac"/>
    <property type="match status" value="1"/>
</dbReference>
<dbReference type="NCBIfam" id="NF006157">
    <property type="entry name" value="PRK08300.1"/>
    <property type="match status" value="1"/>
</dbReference>
<dbReference type="Pfam" id="PF09290">
    <property type="entry name" value="AcetDehyd-dimer"/>
    <property type="match status" value="1"/>
</dbReference>
<dbReference type="Pfam" id="PF01118">
    <property type="entry name" value="Semialdhyde_dh"/>
    <property type="match status" value="1"/>
</dbReference>
<dbReference type="PIRSF" id="PIRSF015689">
    <property type="entry name" value="Actaldh_dh_actl"/>
    <property type="match status" value="1"/>
</dbReference>
<dbReference type="SMART" id="SM00859">
    <property type="entry name" value="Semialdhyde_dh"/>
    <property type="match status" value="1"/>
</dbReference>
<dbReference type="SUPFAM" id="SSF55347">
    <property type="entry name" value="Glyceraldehyde-3-phosphate dehydrogenase-like, C-terminal domain"/>
    <property type="match status" value="1"/>
</dbReference>
<dbReference type="SUPFAM" id="SSF51735">
    <property type="entry name" value="NAD(P)-binding Rossmann-fold domains"/>
    <property type="match status" value="1"/>
</dbReference>